<organism>
    <name type="scientific">Escherichia coli O6:H1 (strain CFT073 / ATCC 700928 / UPEC)</name>
    <dbReference type="NCBI Taxonomy" id="199310"/>
    <lineage>
        <taxon>Bacteria</taxon>
        <taxon>Pseudomonadati</taxon>
        <taxon>Pseudomonadota</taxon>
        <taxon>Gammaproteobacteria</taxon>
        <taxon>Enterobacterales</taxon>
        <taxon>Enterobacteriaceae</taxon>
        <taxon>Escherichia</taxon>
    </lineage>
</organism>
<dbReference type="EC" id="4.3.1.7" evidence="1"/>
<dbReference type="EMBL" id="AE014075">
    <property type="protein sequence ID" value="AAN81424.1"/>
    <property type="molecule type" value="Genomic_DNA"/>
</dbReference>
<dbReference type="RefSeq" id="WP_000372364.1">
    <property type="nucleotide sequence ID" value="NZ_CP051263.1"/>
</dbReference>
<dbReference type="SMR" id="Q8FFA1"/>
<dbReference type="STRING" id="199310.c2974"/>
<dbReference type="KEGG" id="ecc:c2974"/>
<dbReference type="eggNOG" id="COG4302">
    <property type="taxonomic scope" value="Bacteria"/>
</dbReference>
<dbReference type="HOGENOM" id="CLU_068224_0_0_6"/>
<dbReference type="BioCyc" id="ECOL199310:C2974-MONOMER"/>
<dbReference type="UniPathway" id="UPA00560"/>
<dbReference type="Proteomes" id="UP000001410">
    <property type="component" value="Chromosome"/>
</dbReference>
<dbReference type="GO" id="GO:0009350">
    <property type="term" value="C:ethanolamine ammonia-lyase complex"/>
    <property type="evidence" value="ECO:0007669"/>
    <property type="project" value="UniProtKB-UniRule"/>
</dbReference>
<dbReference type="GO" id="GO:0031471">
    <property type="term" value="C:ethanolamine degradation polyhedral organelle"/>
    <property type="evidence" value="ECO:0007669"/>
    <property type="project" value="UniProtKB-UniRule"/>
</dbReference>
<dbReference type="GO" id="GO:0031419">
    <property type="term" value="F:cobalamin binding"/>
    <property type="evidence" value="ECO:0007669"/>
    <property type="project" value="UniProtKB-UniRule"/>
</dbReference>
<dbReference type="GO" id="GO:0008851">
    <property type="term" value="F:ethanolamine ammonia-lyase activity"/>
    <property type="evidence" value="ECO:0007669"/>
    <property type="project" value="UniProtKB-UniRule"/>
</dbReference>
<dbReference type="GO" id="GO:0006520">
    <property type="term" value="P:amino acid metabolic process"/>
    <property type="evidence" value="ECO:0007669"/>
    <property type="project" value="InterPro"/>
</dbReference>
<dbReference type="GO" id="GO:0046336">
    <property type="term" value="P:ethanolamine catabolic process"/>
    <property type="evidence" value="ECO:0007669"/>
    <property type="project" value="UniProtKB-UniRule"/>
</dbReference>
<dbReference type="FunFam" id="3.40.50.11240:FF:000001">
    <property type="entry name" value="Ethanolamine ammonia-lyase light chain"/>
    <property type="match status" value="1"/>
</dbReference>
<dbReference type="Gene3D" id="6.10.140.690">
    <property type="match status" value="1"/>
</dbReference>
<dbReference type="Gene3D" id="6.10.250.2060">
    <property type="match status" value="1"/>
</dbReference>
<dbReference type="Gene3D" id="3.40.50.11240">
    <property type="entry name" value="Ethanolamine ammonia-lyase light chain (EutC)"/>
    <property type="match status" value="1"/>
</dbReference>
<dbReference type="HAMAP" id="MF_00601">
    <property type="entry name" value="EutC"/>
    <property type="match status" value="1"/>
</dbReference>
<dbReference type="InterPro" id="IPR009246">
    <property type="entry name" value="EutC"/>
</dbReference>
<dbReference type="InterPro" id="IPR042251">
    <property type="entry name" value="EutC_C"/>
</dbReference>
<dbReference type="NCBIfam" id="NF003971">
    <property type="entry name" value="PRK05465.1"/>
    <property type="match status" value="1"/>
</dbReference>
<dbReference type="PANTHER" id="PTHR39330">
    <property type="entry name" value="ETHANOLAMINE AMMONIA-LYASE LIGHT CHAIN"/>
    <property type="match status" value="1"/>
</dbReference>
<dbReference type="PANTHER" id="PTHR39330:SF1">
    <property type="entry name" value="ETHANOLAMINE AMMONIA-LYASE SMALL SUBUNIT"/>
    <property type="match status" value="1"/>
</dbReference>
<dbReference type="Pfam" id="PF05985">
    <property type="entry name" value="EutC"/>
    <property type="match status" value="1"/>
</dbReference>
<dbReference type="PIRSF" id="PIRSF018982">
    <property type="entry name" value="EutC"/>
    <property type="match status" value="1"/>
</dbReference>
<feature type="chain" id="PRO_0000205989" description="Ethanolamine ammonia-lyase small subunit">
    <location>
        <begin position="1"/>
        <end position="295"/>
    </location>
</feature>
<feature type="binding site" evidence="1">
    <location>
        <position position="207"/>
    </location>
    <ligand>
        <name>adenosylcob(III)alamin</name>
        <dbReference type="ChEBI" id="CHEBI:18408"/>
    </ligand>
</feature>
<feature type="binding site" evidence="1">
    <location>
        <position position="228"/>
    </location>
    <ligand>
        <name>adenosylcob(III)alamin</name>
        <dbReference type="ChEBI" id="CHEBI:18408"/>
    </ligand>
</feature>
<feature type="binding site" evidence="1">
    <location>
        <position position="258"/>
    </location>
    <ligand>
        <name>adenosylcob(III)alamin</name>
        <dbReference type="ChEBI" id="CHEBI:18408"/>
    </ligand>
</feature>
<evidence type="ECO:0000255" key="1">
    <source>
        <dbReference type="HAMAP-Rule" id="MF_00601"/>
    </source>
</evidence>
<protein>
    <recommendedName>
        <fullName evidence="1">Ethanolamine ammonia-lyase small subunit</fullName>
        <shortName evidence="1">EAL small subunit</shortName>
        <ecNumber evidence="1">4.3.1.7</ecNumber>
    </recommendedName>
</protein>
<proteinExistence type="inferred from homology"/>
<keyword id="KW-1283">Bacterial microcompartment</keyword>
<keyword id="KW-0846">Cobalamin</keyword>
<keyword id="KW-0170">Cobalt</keyword>
<keyword id="KW-0456">Lyase</keyword>
<keyword id="KW-1185">Reference proteome</keyword>
<comment type="function">
    <text evidence="1">Catalyzes the deamination of various vicinal amino-alcohols to oxo compounds. Allows this organism to utilize ethanolamine as the sole source of nitrogen and carbon in the presence of external vitamin B12.</text>
</comment>
<comment type="catalytic activity">
    <reaction evidence="1">
        <text>ethanolamine = acetaldehyde + NH4(+)</text>
        <dbReference type="Rhea" id="RHEA:15313"/>
        <dbReference type="ChEBI" id="CHEBI:15343"/>
        <dbReference type="ChEBI" id="CHEBI:28938"/>
        <dbReference type="ChEBI" id="CHEBI:57603"/>
        <dbReference type="EC" id="4.3.1.7"/>
    </reaction>
</comment>
<comment type="cofactor">
    <cofactor evidence="1">
        <name>adenosylcob(III)alamin</name>
        <dbReference type="ChEBI" id="CHEBI:18408"/>
    </cofactor>
    <text evidence="1">Binds between the large and small subunits.</text>
</comment>
<comment type="pathway">
    <text evidence="1">Amine and polyamine degradation; ethanolamine degradation.</text>
</comment>
<comment type="subunit">
    <text evidence="1">The basic unit is a heterodimer which dimerizes to form tetramers. The heterotetramers trimerize; 6 large subunits form a core ring with 6 small subunits projecting outwards.</text>
</comment>
<comment type="subcellular location">
    <subcellularLocation>
        <location evidence="1">Bacterial microcompartment</location>
    </subcellularLocation>
</comment>
<comment type="similarity">
    <text evidence="1">Belongs to the EutC family.</text>
</comment>
<accession>Q8FFA1</accession>
<gene>
    <name evidence="1" type="primary">eutC</name>
    <name type="ordered locus">c2974</name>
</gene>
<reference key="1">
    <citation type="journal article" date="2002" name="Proc. Natl. Acad. Sci. U.S.A.">
        <title>Extensive mosaic structure revealed by the complete genome sequence of uropathogenic Escherichia coli.</title>
        <authorList>
            <person name="Welch R.A."/>
            <person name="Burland V."/>
            <person name="Plunkett G. III"/>
            <person name="Redford P."/>
            <person name="Roesch P."/>
            <person name="Rasko D."/>
            <person name="Buckles E.L."/>
            <person name="Liou S.-R."/>
            <person name="Boutin A."/>
            <person name="Hackett J."/>
            <person name="Stroud D."/>
            <person name="Mayhew G.F."/>
            <person name="Rose D.J."/>
            <person name="Zhou S."/>
            <person name="Schwartz D.C."/>
            <person name="Perna N.T."/>
            <person name="Mobley H.L.T."/>
            <person name="Donnenberg M.S."/>
            <person name="Blattner F.R."/>
        </authorList>
    </citation>
    <scope>NUCLEOTIDE SEQUENCE [LARGE SCALE GENOMIC DNA]</scope>
    <source>
        <strain>CFT073 / ATCC 700928 / UPEC</strain>
    </source>
</reference>
<name>EUTC_ECOL6</name>
<sequence length="295" mass="31812">MDQKQIEEIVRSVMASMGQTAPAPSEAKCATTNCAAPVTSESCALDLGSAEAKAWIGVENPHRADVLTELRRSTVARVCTGRAGPRPRTQALLRFLADHSRSKDTVLKEVPEEWVKAQGLLEVRSEISDKNLYLTRPDMGRRLCAEAVEALKAQCVANPDVQVVISDGLSTDAITVNYEEILPPLMAGLKQAGLKVGTPFFVRYGRVKIEDQIGEILGAKVVILLVGERPGLGQSESLSCYAVYSPRMATTVEADRTCISNIHQGGTPPVEAAAVIVDLAKRMLEQKASGINMTR</sequence>